<gene>
    <name evidence="10" type="primary">ENO</name>
    <name type="ORF">PF10_0155</name>
    <name type="ORF">PF3D7_1015900</name>
</gene>
<keyword id="KW-0007">Acetylation</keyword>
<keyword id="KW-1003">Cell membrane</keyword>
<keyword id="KW-0963">Cytoplasm</keyword>
<keyword id="KW-0206">Cytoskeleton</keyword>
<keyword id="KW-0324">Glycolysis</keyword>
<keyword id="KW-1017">Isopeptide bond</keyword>
<keyword id="KW-0456">Lyase</keyword>
<keyword id="KW-0460">Magnesium</keyword>
<keyword id="KW-0472">Membrane</keyword>
<keyword id="KW-0479">Metal-binding</keyword>
<keyword id="KW-0539">Nucleus</keyword>
<keyword id="KW-0597">Phosphoprotein</keyword>
<keyword id="KW-1185">Reference proteome</keyword>
<keyword id="KW-0832">Ubl conjugation</keyword>
<keyword id="KW-0926">Vacuole</keyword>
<name>ENO_PLAF7</name>
<evidence type="ECO:0000250" key="1">
    <source>
        <dbReference type="UniProtKB" id="P06733"/>
    </source>
</evidence>
<evidence type="ECO:0000250" key="2">
    <source>
        <dbReference type="UniProtKB" id="Q7RA60"/>
    </source>
</evidence>
<evidence type="ECO:0000250" key="3">
    <source>
        <dbReference type="UniProtKB" id="W7JLR6"/>
    </source>
</evidence>
<evidence type="ECO:0000269" key="4">
    <source>
    </source>
</evidence>
<evidence type="ECO:0000269" key="5">
    <source>
    </source>
</evidence>
<evidence type="ECO:0000269" key="6">
    <source>
    </source>
</evidence>
<evidence type="ECO:0000269" key="7">
    <source>
    </source>
</evidence>
<evidence type="ECO:0000269" key="8">
    <source>
    </source>
</evidence>
<evidence type="ECO:0000303" key="9">
    <source>
    </source>
</evidence>
<evidence type="ECO:0000303" key="10">
    <source>
    </source>
</evidence>
<evidence type="ECO:0000305" key="11"/>
<evidence type="ECO:0000305" key="12">
    <source>
    </source>
</evidence>
<evidence type="ECO:0000305" key="13">
    <source>
    </source>
</evidence>
<comment type="function">
    <text evidence="3 4 8">Glycolytic enzyme that catalyzes the conversion of 2-phosphoglycerate to phosphoenolpyruvate (PubMed:19268421, PubMed:25787157). In addition to glycolysis, involved in various processes such as parasite development and invasion (By similarity). Plays an essential role during ookinete invasion of the mosquito vector midgut by mediating the interaction of the ookinete with the midgut epithelium and, further, by binding to mammalian host plasminogen in the blood meal, whose conversion to active plasmin promotes the invasion process (By similarity).</text>
</comment>
<comment type="catalytic activity">
    <reaction evidence="4 8">
        <text>(2R)-2-phosphoglycerate = phosphoenolpyruvate + H2O</text>
        <dbReference type="Rhea" id="RHEA:10164"/>
        <dbReference type="ChEBI" id="CHEBI:15377"/>
        <dbReference type="ChEBI" id="CHEBI:58289"/>
        <dbReference type="ChEBI" id="CHEBI:58702"/>
        <dbReference type="EC" id="4.2.1.11"/>
    </reaction>
    <physiologicalReaction direction="left-to-right" evidence="4 8">
        <dbReference type="Rhea" id="RHEA:10165"/>
    </physiologicalReaction>
    <physiologicalReaction direction="right-to-left" evidence="3">
        <dbReference type="Rhea" id="RHEA:10166"/>
    </physiologicalReaction>
</comment>
<comment type="cofactor">
    <cofactor evidence="4 8">
        <name>Mg(2+)</name>
        <dbReference type="ChEBI" id="CHEBI:18420"/>
    </cofactor>
    <text evidence="3 8">Binds 2 Mg(2+) ions per subunit (PubMed:25787157). Mg(2+) is required for catalysis and for stabilizing the dimer (PubMed:25787157). Unlike for mammalian and yeast enolases, Mg(2+) is dispensable to form an active closed conformation (PubMed:25787157). Inhibited by high levels of Mg(2+) (By similarity).</text>
</comment>
<comment type="biophysicochemical properties">
    <kinetics>
        <KM evidence="4">40 uM for 2-phosphoglyceric acid (at 21 degrees Celsius and pH 7.5)</KM>
        <KM evidence="8">61 uM for 2-phosphoglyceric acid (at 25 degrees Celsius and pH 7.5)</KM>
        <text evidence="4">kcat is 20.6 sec(-1) with 2-phosphoglyceric acid as substrate (at 21 degrees Celsius and pH 7.5).</text>
    </kinetics>
    <temperatureDependence>
        <text evidence="4">Optimum temperature is between 20-50 degrees Celsius.</text>
    </temperatureDependence>
</comment>
<comment type="pathway">
    <text evidence="12">Carbohydrate degradation; glycolysis; pyruvate from D-glyceraldehyde 3-phosphate: step 4/5.</text>
</comment>
<comment type="subunit">
    <text evidence="3 4 5 7 8">Homodimer (PubMed:19268421, PubMed:25787157). Forms a complex at least composed of DegP, ENO and HSP70 (PubMed:24494818). Interacts with G-actin (PubMed:19642995). Interacts (via the DKSLVK motif) with mammalian host PLG/plasminogen (present in the mosquito blood meal); the interaction occurs at the ookinete cell surface and is required for ookinete invasion of the mosquito midgut (PubMed:19642995). Interacts with A.gambiae EBP; depending on the Plasmodium species, the interaction is either involved in ookinete invasion of the mosquito midgut (P.berghei) or is dispensable (P.falciparum) (By similarity).</text>
</comment>
<comment type="subcellular location">
    <subcellularLocation>
        <location evidence="5 6">Cytoplasm</location>
    </subcellularLocation>
    <subcellularLocation>
        <location evidence="5">Nucleus</location>
    </subcellularLocation>
    <subcellularLocation>
        <location evidence="3">Cytoplasm</location>
        <location evidence="3">Cytoskeleton</location>
    </subcellularLocation>
    <subcellularLocation>
        <location evidence="5 6">Cell surface</location>
    </subcellularLocation>
    <subcellularLocation>
        <location evidence="2">Cell membrane</location>
        <topology evidence="11">Peripheral membrane protein</topology>
        <orientation evidence="2">Cytoplasmic side</orientation>
    </subcellularLocation>
    <subcellularLocation>
        <location evidence="5">Vacuole</location>
    </subcellularLocation>
    <text evidence="2 3 5 6">Partially localizes to the nucleus in rings and trophozoites (PubMed:19642995). Localization to the nucleus and food vacuole is higher in early and mid-stage trophozoites compared to the late-stage trophozoites and schizonts (PubMed:19642995). In the nucleus, localizes to heterochromatin region (PubMed:19642995). In rings, nuclear localization is dependent on the actin cytoskeleton (PubMed:19642995). In the trophozoite food vacuole, colocalizes with hemozoin, a product of heme detoxification (PubMed:19642995). Localizes to the cell surface of merozoites (PubMed:19642995). In gametocytes, predominantly localizes to the actin cytoskeleton (By similarity). In sporozoites, localizes to punctate structures beneath the cell membrane (By similarity). Localizes to the cell surface of ookinetes, especially on the apical pellicle complex that is involved in invasion (By similarity). When phosphorylated at Thr-339, localizes to the cytoskeleton (By similarity). When phosphorylated at Ser-42, localizes to the cytoplasm (PubMed:24009698). When ubiquitinated at Lys-138, acetylated at Lys-133 and Lys-375 and phosphorylated at Tyr-139, localizes to the food vacuole (By similarity). When triubiquitinated at Lys-138, appears to colocalize with hemozoin in the food vacuole (By similarity).</text>
</comment>
<comment type="developmental stage">
    <text evidence="5 6">During the asexual blood stage, expressed in rings, trophozoites, schizonts and merozoites (at protein level).</text>
</comment>
<comment type="domain">
    <text evidence="4 8 12 13">The pentapeptide insert motif is required for the stabilization of the apo-enzyme in an active closed conformation, independently of Mg(2+) binding (PubMed:19268421, PubMed:25787157). The motif is also required for homodimerization (PubMed:19268421, PubMed:25787157). This motif is only present in Apicomplexa and plant enolases (Probable).</text>
</comment>
<comment type="domain">
    <text evidence="3">The DKSLVK motif binds to the lysine-binding Kringle domains of plasminogen from various mammalian species (By similarity). This motif is present only in enolases of plant and several microbial pathogens including Plasmodium species (By similarity).</text>
</comment>
<comment type="similarity">
    <text evidence="11">Belongs to the enolase family.</text>
</comment>
<organism>
    <name type="scientific">Plasmodium falciparum (isolate 3D7)</name>
    <dbReference type="NCBI Taxonomy" id="36329"/>
    <lineage>
        <taxon>Eukaryota</taxon>
        <taxon>Sar</taxon>
        <taxon>Alveolata</taxon>
        <taxon>Apicomplexa</taxon>
        <taxon>Aconoidasida</taxon>
        <taxon>Haemosporida</taxon>
        <taxon>Plasmodiidae</taxon>
        <taxon>Plasmodium</taxon>
        <taxon>Plasmodium (Laverania)</taxon>
    </lineage>
</organism>
<accession>Q8IJN7</accession>
<accession>A0A143ZZ61</accession>
<sequence>MAHVITRINAREILDSRGNPTVEVDLETNLGIFRAAVPSGASTGIYEALELRDNDKSRYLGKGVQKAIKNINEIIAPKLIGMNCTEQKKIDNLMVEELDGSKNEWGWSKSKLGANAILAISMAVCRAGAAANKVSLYKYLAQLAGKKSDQMVLPVPCLNVINGGSHAGNKLSFQEFMIVPVGAPSFKEALRYGAEVYHTLKSEIKKKYGIDATNVGDEGGFAPNILNANEALDLLVTAIKSAGYEGKVKIAMDVAASEFYNSENKTYDLDFKTPNNDKSLVKTGAQLVDLYIDLVKKYPIVSIEDPFDQDDWENYAKLTAAIGKDVQIVGDDLLVTNPTRITKALEKNACNALLLKVNQIGSITEAIEACLLSQKNNWGVMVSHRSGETEDVFIADLVVALRTGQIKTGAPCRSERNAKYNQLLRIEESLGNNAVFAGEKFRLQLN</sequence>
<protein>
    <recommendedName>
        <fullName evidence="9">Enolase</fullName>
        <shortName evidence="9">Pfen</shortName>
        <shortName evidence="10">Pfeno</shortName>
        <ecNumber evidence="4 8">4.2.1.11</ecNumber>
    </recommendedName>
    <alternativeName>
        <fullName evidence="11">2-phospho-D-glycerate hydro-lyase</fullName>
    </alternativeName>
    <alternativeName>
        <fullName evidence="11">2-phosphoglycerate dehydratase</fullName>
    </alternativeName>
</protein>
<feature type="chain" id="PRO_0000134089" description="Enolase">
    <location>
        <begin position="1"/>
        <end position="446"/>
    </location>
</feature>
<feature type="short sequence motif" description="Pentapeptide insert" evidence="4 8">
    <location>
        <begin position="104"/>
        <end position="108"/>
    </location>
</feature>
<feature type="short sequence motif" description="DKSLVK motif" evidence="3">
    <location>
        <begin position="277"/>
        <end position="282"/>
    </location>
</feature>
<feature type="active site" description="Proton donor" evidence="1">
    <location>
        <position position="218"/>
    </location>
</feature>
<feature type="active site" description="Proton acceptor" evidence="1">
    <location>
        <position position="356"/>
    </location>
</feature>
<feature type="binding site" evidence="1">
    <location>
        <position position="42"/>
    </location>
    <ligand>
        <name>Mg(2+)</name>
        <dbReference type="ChEBI" id="CHEBI:18420"/>
        <label>1</label>
    </ligand>
</feature>
<feature type="binding site" evidence="1">
    <location>
        <position position="166"/>
    </location>
    <ligand>
        <name>substrate</name>
    </ligand>
</feature>
<feature type="binding site" evidence="1">
    <location>
        <position position="175"/>
    </location>
    <ligand>
        <name>substrate</name>
    </ligand>
</feature>
<feature type="binding site" evidence="1">
    <location>
        <position position="253"/>
    </location>
    <ligand>
        <name>Mg(2+)</name>
        <dbReference type="ChEBI" id="CHEBI:18420"/>
        <label>2</label>
    </ligand>
</feature>
<feature type="binding site" evidence="1">
    <location>
        <position position="304"/>
    </location>
    <ligand>
        <name>Mg(2+)</name>
        <dbReference type="ChEBI" id="CHEBI:18420"/>
        <label>2</label>
    </ligand>
</feature>
<feature type="binding site" evidence="1">
    <location>
        <position position="304"/>
    </location>
    <ligand>
        <name>substrate</name>
    </ligand>
</feature>
<feature type="binding site" evidence="1">
    <location>
        <position position="331"/>
    </location>
    <ligand>
        <name>Mg(2+)</name>
        <dbReference type="ChEBI" id="CHEBI:18420"/>
        <label>2</label>
    </ligand>
</feature>
<feature type="binding site" evidence="1">
    <location>
        <position position="331"/>
    </location>
    <ligand>
        <name>substrate</name>
    </ligand>
</feature>
<feature type="binding site" evidence="1">
    <location>
        <begin position="383"/>
        <end position="386"/>
    </location>
    <ligand>
        <name>substrate</name>
    </ligand>
</feature>
<feature type="binding site" evidence="1">
    <location>
        <position position="407"/>
    </location>
    <ligand>
        <name>substrate</name>
    </ligand>
</feature>
<feature type="modified residue" description="Phosphoserine" evidence="6">
    <location>
        <position position="42"/>
    </location>
</feature>
<feature type="modified residue" description="N6-acetyllysine" evidence="2">
    <location>
        <position position="133"/>
    </location>
</feature>
<feature type="modified residue" description="Phosphotyrosine" evidence="2">
    <location>
        <position position="139"/>
    </location>
</feature>
<feature type="modified residue" description="Phosphothreonine" evidence="2">
    <location>
        <position position="339"/>
    </location>
</feature>
<feature type="modified residue" description="N6-acetyllysine" evidence="2">
    <location>
        <position position="375"/>
    </location>
</feature>
<feature type="cross-link" description="Glycyl lysine isopeptide (Lys-Gly) (interchain with G-Cter in ubiquitin)" evidence="2">
    <location>
        <position position="138"/>
    </location>
</feature>
<feature type="mutagenesis site" description="Impairs homodimerization. 30-fold decrease in catalytic activity without affecting affinity for substrate 2-phosphoglyceric acid. Decreases affinity for Mg(2+)." evidence="4">
    <location>
        <begin position="104"/>
        <end position="108"/>
    </location>
</feature>
<feature type="mutagenesis site" description="Reduces homodimerization efficiency. Decreases catalytic activity without affecting affinity for substrate 2-phosphoglyceric acid. Loss of Mg(2+) binding." evidence="8">
    <original>S</original>
    <variation>A</variation>
    <location>
        <position position="108"/>
    </location>
</feature>
<feature type="mutagenesis site" description="No effect on homodimerization. Decreases catalytic activity without affecting affinity for substrate 2-phosphoglyceric acid. Loss of Mg(2+) binding." evidence="8">
    <original>S</original>
    <variation>G</variation>
    <location>
        <position position="108"/>
    </location>
</feature>
<reference key="1">
    <citation type="journal article" date="2002" name="Nature">
        <title>Genome sequence of the human malaria parasite Plasmodium falciparum.</title>
        <authorList>
            <person name="Gardner M.J."/>
            <person name="Hall N."/>
            <person name="Fung E."/>
            <person name="White O."/>
            <person name="Berriman M."/>
            <person name="Hyman R.W."/>
            <person name="Carlton J.M."/>
            <person name="Pain A."/>
            <person name="Nelson K.E."/>
            <person name="Bowman S."/>
            <person name="Paulsen I.T."/>
            <person name="James K.D."/>
            <person name="Eisen J.A."/>
            <person name="Rutherford K.M."/>
            <person name="Salzberg S.L."/>
            <person name="Craig A."/>
            <person name="Kyes S."/>
            <person name="Chan M.-S."/>
            <person name="Nene V."/>
            <person name="Shallom S.J."/>
            <person name="Suh B."/>
            <person name="Peterson J."/>
            <person name="Angiuoli S."/>
            <person name="Pertea M."/>
            <person name="Allen J."/>
            <person name="Selengut J."/>
            <person name="Haft D."/>
            <person name="Mather M.W."/>
            <person name="Vaidya A.B."/>
            <person name="Martin D.M.A."/>
            <person name="Fairlamb A.H."/>
            <person name="Fraunholz M.J."/>
            <person name="Roos D.S."/>
            <person name="Ralph S.A."/>
            <person name="McFadden G.I."/>
            <person name="Cummings L.M."/>
            <person name="Subramanian G.M."/>
            <person name="Mungall C."/>
            <person name="Venter J.C."/>
            <person name="Carucci D.J."/>
            <person name="Hoffman S.L."/>
            <person name="Newbold C."/>
            <person name="Davis R.W."/>
            <person name="Fraser C.M."/>
            <person name="Barrell B.G."/>
        </authorList>
    </citation>
    <scope>NUCLEOTIDE SEQUENCE [LARGE SCALE GENOMIC DNA]</scope>
    <source>
        <strain>3D7</strain>
    </source>
</reference>
<reference key="2">
    <citation type="journal article" date="2009" name="Arch. Biochem. Biophys.">
        <title>Effect of deletion of a plant like pentapeptide insert on kinetic, structural and immunological properties of enolase from Plasmodium falciparum.</title>
        <authorList>
            <person name="Vora H.K."/>
            <person name="Shaik F.R."/>
            <person name="Pal-Bhowmick I."/>
            <person name="Mout R."/>
            <person name="Jarori G.K."/>
        </authorList>
    </citation>
    <scope>FUNCTION</scope>
    <scope>CATALYTIC ACTIVITY</scope>
    <scope>COFACTOR</scope>
    <scope>BIOPHYSICOCHEMICAL PROPERTIES</scope>
    <scope>PATHWAY</scope>
    <scope>SUBUNIT</scope>
    <scope>MOTIF</scope>
    <scope>MUTAGENESIS OF 104-GLU--SER-108</scope>
</reference>
<reference key="3">
    <citation type="journal article" date="2009" name="Malar. J.">
        <title>Plasmodium falciparum enolase: stage-specific expression and sub-cellular localization.</title>
        <authorList>
            <person name="Bhowmick I.P."/>
            <person name="Kumar N."/>
            <person name="Sharma S."/>
            <person name="Coppens I."/>
            <person name="Jarori G.K."/>
        </authorList>
    </citation>
    <scope>INTERACTION WITH G-ACTIN AND HOST PLG</scope>
    <scope>SUBCELLULAR LOCATION</scope>
    <scope>DEVELOPMENTAL STAGE</scope>
</reference>
<reference key="4">
    <citation type="journal article" date="2013" name="PLoS ONE">
        <title>Food vacuole associated enolase in plasmodium undergoes multiple post-translational modifications: evidence for atypical ubiquitination.</title>
        <authorList>
            <person name="Shevade S."/>
            <person name="Jindal N."/>
            <person name="Dutta S."/>
            <person name="Jarori G.K."/>
        </authorList>
    </citation>
    <scope>SUBCELLULAR LOCATION</scope>
    <scope>DEVELOPMENTAL STAGE</scope>
    <scope>PHOSPHORYLATION AT SER-42</scope>
</reference>
<reference key="5">
    <citation type="journal article" date="2014" name="FEBS J.">
        <title>A secretory multifunctional serine protease, DegP of Plasmodium falciparum, plays an important role in thermo-oxidative stress, parasite growth and development.</title>
        <authorList>
            <person name="Sharma S."/>
            <person name="Jadli M."/>
            <person name="Singh A."/>
            <person name="Arora K."/>
            <person name="Malhotra P."/>
        </authorList>
    </citation>
    <scope>IDENTIFICATION IN A COMPLEX WITH HSP70 AND DEGP</scope>
    <scope>IDENTIFICATION BY MASS SPECTROMETRY</scope>
</reference>
<reference key="6">
    <citation type="journal article" date="2015" name="FEBS J.">
        <title>Replacement of Ser108 in Plasmodium falciparum enolase results in weak Mg(II) binding: role of a parasite-specific pentapeptide insert in stabilizing the active conformation of the enzyme.</title>
        <authorList>
            <person name="Dutta S."/>
            <person name="Mukherjee D."/>
            <person name="Jarori G.K."/>
        </authorList>
    </citation>
    <scope>FUNCTION</scope>
    <scope>CATALYTIC ACTIVITY</scope>
    <scope>COFACTOR</scope>
    <scope>SUBUNIT</scope>
    <scope>MOTIF</scope>
    <scope>MUTAGENESIS OF SER-108</scope>
</reference>
<dbReference type="EC" id="4.2.1.11" evidence="4 8"/>
<dbReference type="EMBL" id="LN999944">
    <property type="protein sequence ID" value="CZT98412.1"/>
    <property type="molecule type" value="Genomic_DNA"/>
</dbReference>
<dbReference type="RefSeq" id="XP_001347440.1">
    <property type="nucleotide sequence ID" value="XM_001347404.2"/>
</dbReference>
<dbReference type="SMR" id="Q8IJN7"/>
<dbReference type="BioGRID" id="1205736">
    <property type="interactions" value="9"/>
</dbReference>
<dbReference type="FunCoup" id="Q8IJN7">
    <property type="interactions" value="90"/>
</dbReference>
<dbReference type="IntAct" id="Q8IJN7">
    <property type="interactions" value="9"/>
</dbReference>
<dbReference type="MINT" id="Q8IJN7"/>
<dbReference type="STRING" id="36329.Q8IJN7"/>
<dbReference type="DrugBank" id="DB11638">
    <property type="generic name" value="Artenimol"/>
</dbReference>
<dbReference type="iPTMnet" id="Q8IJN7"/>
<dbReference type="SwissPalm" id="Q8IJN7"/>
<dbReference type="PaxDb" id="5833-PF10_0155"/>
<dbReference type="EnsemblProtists" id="CZT98412">
    <property type="protein sequence ID" value="CZT98412"/>
    <property type="gene ID" value="PF3D7_1015900"/>
</dbReference>
<dbReference type="GeneID" id="810313"/>
<dbReference type="KEGG" id="pfa:PF3D7_1015900"/>
<dbReference type="VEuPathDB" id="PlasmoDB:PF3D7_1015900"/>
<dbReference type="HOGENOM" id="CLU_031223_0_0_1"/>
<dbReference type="OMA" id="RCMMSHR"/>
<dbReference type="OrthoDB" id="1739814at2759"/>
<dbReference type="PhylomeDB" id="Q8IJN7"/>
<dbReference type="BRENDA" id="4.2.1.11">
    <property type="organism ID" value="4889"/>
</dbReference>
<dbReference type="Reactome" id="R-PFA-70171">
    <property type="pathway name" value="Glycolysis"/>
</dbReference>
<dbReference type="Reactome" id="R-PFA-70263">
    <property type="pathway name" value="Gluconeogenesis"/>
</dbReference>
<dbReference type="SABIO-RK" id="Q8IJN7"/>
<dbReference type="UniPathway" id="UPA00109">
    <property type="reaction ID" value="UER00187"/>
</dbReference>
<dbReference type="Proteomes" id="UP000001450">
    <property type="component" value="Chromosome 10"/>
</dbReference>
<dbReference type="GO" id="GO:0009986">
    <property type="term" value="C:cell surface"/>
    <property type="evidence" value="ECO:0000314"/>
    <property type="project" value="GeneDB"/>
</dbReference>
<dbReference type="GO" id="GO:0005737">
    <property type="term" value="C:cytoplasm"/>
    <property type="evidence" value="ECO:0000314"/>
    <property type="project" value="UniProtKB"/>
</dbReference>
<dbReference type="GO" id="GO:0005856">
    <property type="term" value="C:cytoskeleton"/>
    <property type="evidence" value="ECO:0000314"/>
    <property type="project" value="GeneDB"/>
</dbReference>
<dbReference type="GO" id="GO:0020020">
    <property type="term" value="C:food vacuole"/>
    <property type="evidence" value="ECO:0000314"/>
    <property type="project" value="GeneDB"/>
</dbReference>
<dbReference type="GO" id="GO:0005634">
    <property type="term" value="C:nucleus"/>
    <property type="evidence" value="ECO:0000314"/>
    <property type="project" value="GeneDB"/>
</dbReference>
<dbReference type="GO" id="GO:0000015">
    <property type="term" value="C:phosphopyruvate hydratase complex"/>
    <property type="evidence" value="ECO:0000318"/>
    <property type="project" value="GO_Central"/>
</dbReference>
<dbReference type="GO" id="GO:0005886">
    <property type="term" value="C:plasma membrane"/>
    <property type="evidence" value="ECO:0000314"/>
    <property type="project" value="GeneDB"/>
</dbReference>
<dbReference type="GO" id="GO:0003779">
    <property type="term" value="F:actin binding"/>
    <property type="evidence" value="ECO:0000314"/>
    <property type="project" value="UniProtKB"/>
</dbReference>
<dbReference type="GO" id="GO:0000287">
    <property type="term" value="F:magnesium ion binding"/>
    <property type="evidence" value="ECO:0000314"/>
    <property type="project" value="UniProtKB"/>
</dbReference>
<dbReference type="GO" id="GO:0004634">
    <property type="term" value="F:phosphopyruvate hydratase activity"/>
    <property type="evidence" value="ECO:0000314"/>
    <property type="project" value="UniProtKB"/>
</dbReference>
<dbReference type="GO" id="GO:0042803">
    <property type="term" value="F:protein homodimerization activity"/>
    <property type="evidence" value="ECO:0000314"/>
    <property type="project" value="UniProtKB"/>
</dbReference>
<dbReference type="GO" id="GO:0002253">
    <property type="term" value="P:activation of immune response"/>
    <property type="evidence" value="ECO:0000314"/>
    <property type="project" value="GeneDB"/>
</dbReference>
<dbReference type="GO" id="GO:0000045">
    <property type="term" value="P:autophagosome assembly"/>
    <property type="evidence" value="ECO:0000304"/>
    <property type="project" value="GeneDB"/>
</dbReference>
<dbReference type="GO" id="GO:0006351">
    <property type="term" value="P:DNA-templated transcription"/>
    <property type="evidence" value="ECO:0000304"/>
    <property type="project" value="GeneDB"/>
</dbReference>
<dbReference type="GO" id="GO:0006096">
    <property type="term" value="P:glycolytic process"/>
    <property type="evidence" value="ECO:0000318"/>
    <property type="project" value="GO_Central"/>
</dbReference>
<dbReference type="CDD" id="cd03313">
    <property type="entry name" value="enolase"/>
    <property type="match status" value="1"/>
</dbReference>
<dbReference type="FunFam" id="3.30.390.10:FF:000001">
    <property type="entry name" value="Enolase"/>
    <property type="match status" value="1"/>
</dbReference>
<dbReference type="FunFam" id="3.20.20.120:FF:000002">
    <property type="entry name" value="Enolase 1"/>
    <property type="match status" value="1"/>
</dbReference>
<dbReference type="Gene3D" id="3.20.20.120">
    <property type="entry name" value="Enolase-like C-terminal domain"/>
    <property type="match status" value="1"/>
</dbReference>
<dbReference type="Gene3D" id="3.30.390.10">
    <property type="entry name" value="Enolase-like, N-terminal domain"/>
    <property type="match status" value="1"/>
</dbReference>
<dbReference type="HAMAP" id="MF_00318">
    <property type="entry name" value="Enolase"/>
    <property type="match status" value="1"/>
</dbReference>
<dbReference type="InterPro" id="IPR000941">
    <property type="entry name" value="Enolase"/>
</dbReference>
<dbReference type="InterPro" id="IPR036849">
    <property type="entry name" value="Enolase-like_C_sf"/>
</dbReference>
<dbReference type="InterPro" id="IPR029017">
    <property type="entry name" value="Enolase-like_N"/>
</dbReference>
<dbReference type="InterPro" id="IPR020810">
    <property type="entry name" value="Enolase_C"/>
</dbReference>
<dbReference type="InterPro" id="IPR020809">
    <property type="entry name" value="Enolase_CS"/>
</dbReference>
<dbReference type="InterPro" id="IPR020811">
    <property type="entry name" value="Enolase_N"/>
</dbReference>
<dbReference type="NCBIfam" id="TIGR01060">
    <property type="entry name" value="eno"/>
    <property type="match status" value="1"/>
</dbReference>
<dbReference type="PANTHER" id="PTHR11902">
    <property type="entry name" value="ENOLASE"/>
    <property type="match status" value="1"/>
</dbReference>
<dbReference type="PANTHER" id="PTHR11902:SF1">
    <property type="entry name" value="ENOLASE"/>
    <property type="match status" value="1"/>
</dbReference>
<dbReference type="Pfam" id="PF00113">
    <property type="entry name" value="Enolase_C"/>
    <property type="match status" value="1"/>
</dbReference>
<dbReference type="Pfam" id="PF03952">
    <property type="entry name" value="Enolase_N"/>
    <property type="match status" value="1"/>
</dbReference>
<dbReference type="PIRSF" id="PIRSF001400">
    <property type="entry name" value="Enolase"/>
    <property type="match status" value="1"/>
</dbReference>
<dbReference type="PRINTS" id="PR00148">
    <property type="entry name" value="ENOLASE"/>
</dbReference>
<dbReference type="SFLD" id="SFLDF00002">
    <property type="entry name" value="enolase"/>
    <property type="match status" value="1"/>
</dbReference>
<dbReference type="SFLD" id="SFLDG00178">
    <property type="entry name" value="enolase"/>
    <property type="match status" value="1"/>
</dbReference>
<dbReference type="SMART" id="SM01192">
    <property type="entry name" value="Enolase_C"/>
    <property type="match status" value="1"/>
</dbReference>
<dbReference type="SMART" id="SM01193">
    <property type="entry name" value="Enolase_N"/>
    <property type="match status" value="1"/>
</dbReference>
<dbReference type="SUPFAM" id="SSF51604">
    <property type="entry name" value="Enolase C-terminal domain-like"/>
    <property type="match status" value="1"/>
</dbReference>
<dbReference type="SUPFAM" id="SSF54826">
    <property type="entry name" value="Enolase N-terminal domain-like"/>
    <property type="match status" value="1"/>
</dbReference>
<dbReference type="PROSITE" id="PS00164">
    <property type="entry name" value="ENOLASE"/>
    <property type="match status" value="1"/>
</dbReference>
<proteinExistence type="evidence at protein level"/>